<keyword id="KW-0963">Cytoplasm</keyword>
<keyword id="KW-0520">NAD</keyword>
<keyword id="KW-0560">Oxidoreductase</keyword>
<keyword id="KW-0597">Phosphoprotein</keyword>
<keyword id="KW-0346">Stress response</keyword>
<name>LDH1_STAA2</name>
<accession>A6TY25</accession>
<reference key="1">
    <citation type="submission" date="2007-06" db="EMBL/GenBank/DDBJ databases">
        <title>Complete sequence of chromosome of Staphylococcus aureus subsp. aureus JH1.</title>
        <authorList>
            <consortium name="US DOE Joint Genome Institute"/>
            <person name="Copeland A."/>
            <person name="Lucas S."/>
            <person name="Lapidus A."/>
            <person name="Barry K."/>
            <person name="Detter J.C."/>
            <person name="Glavina del Rio T."/>
            <person name="Hammon N."/>
            <person name="Israni S."/>
            <person name="Dalin E."/>
            <person name="Tice H."/>
            <person name="Pitluck S."/>
            <person name="Chain P."/>
            <person name="Malfatti S."/>
            <person name="Shin M."/>
            <person name="Vergez L."/>
            <person name="Schmutz J."/>
            <person name="Larimer F."/>
            <person name="Land M."/>
            <person name="Hauser L."/>
            <person name="Kyrpides N."/>
            <person name="Ivanova N."/>
            <person name="Tomasz A."/>
            <person name="Richardson P."/>
        </authorList>
    </citation>
    <scope>NUCLEOTIDE SEQUENCE [LARGE SCALE GENOMIC DNA]</scope>
    <source>
        <strain>JH1</strain>
    </source>
</reference>
<comment type="function">
    <text evidence="1 2">Catalyzes the conversion of lactate to pyruvate (Potential). Appears to be the primary factor that allows S.aureus growth during nitrosative stress in both aerobically and anaerobically cultured cells (By similarity).</text>
</comment>
<comment type="catalytic activity">
    <reaction evidence="2">
        <text>(S)-lactate + NAD(+) = pyruvate + NADH + H(+)</text>
        <dbReference type="Rhea" id="RHEA:23444"/>
        <dbReference type="ChEBI" id="CHEBI:15361"/>
        <dbReference type="ChEBI" id="CHEBI:15378"/>
        <dbReference type="ChEBI" id="CHEBI:16651"/>
        <dbReference type="ChEBI" id="CHEBI:57540"/>
        <dbReference type="ChEBI" id="CHEBI:57945"/>
        <dbReference type="EC" id="1.1.1.27"/>
    </reaction>
</comment>
<comment type="pathway">
    <text evidence="2">Fermentation; pyruvate fermentation to lactate; (S)-lactate from pyruvate: step 1/1.</text>
</comment>
<comment type="subunit">
    <text evidence="2">Homotetramer.</text>
</comment>
<comment type="subcellular location">
    <subcellularLocation>
        <location evidence="2">Cytoplasm</location>
    </subcellularLocation>
</comment>
<comment type="similarity">
    <text evidence="2 3">Belongs to the LDH/MDH superfamily. LDH family.</text>
</comment>
<proteinExistence type="inferred from homology"/>
<protein>
    <recommendedName>
        <fullName evidence="2">L-lactate dehydrogenase 1</fullName>
        <shortName evidence="2">L-LDH 1</shortName>
        <ecNumber evidence="2">1.1.1.27</ecNumber>
    </recommendedName>
</protein>
<feature type="chain" id="PRO_0000343834" description="L-lactate dehydrogenase 1">
    <location>
        <begin position="1"/>
        <end position="317"/>
    </location>
</feature>
<feature type="active site" description="Proton acceptor" evidence="2">
    <location>
        <position position="179"/>
    </location>
</feature>
<feature type="binding site" evidence="2">
    <location>
        <position position="17"/>
    </location>
    <ligand>
        <name>NAD(+)</name>
        <dbReference type="ChEBI" id="CHEBI:57540"/>
    </ligand>
</feature>
<feature type="binding site" evidence="2">
    <location>
        <position position="38"/>
    </location>
    <ligand>
        <name>NAD(+)</name>
        <dbReference type="ChEBI" id="CHEBI:57540"/>
    </ligand>
</feature>
<feature type="binding site" evidence="2">
    <location>
        <position position="43"/>
    </location>
    <ligand>
        <name>NAD(+)</name>
        <dbReference type="ChEBI" id="CHEBI:57540"/>
    </ligand>
</feature>
<feature type="binding site" evidence="2">
    <location>
        <position position="69"/>
    </location>
    <ligand>
        <name>NAD(+)</name>
        <dbReference type="ChEBI" id="CHEBI:57540"/>
    </ligand>
</feature>
<feature type="binding site" evidence="2">
    <location>
        <begin position="83"/>
        <end position="84"/>
    </location>
    <ligand>
        <name>NAD(+)</name>
        <dbReference type="ChEBI" id="CHEBI:57540"/>
    </ligand>
</feature>
<feature type="binding site" evidence="2">
    <location>
        <position position="86"/>
    </location>
    <ligand>
        <name>substrate</name>
    </ligand>
</feature>
<feature type="binding site" evidence="2">
    <location>
        <position position="92"/>
    </location>
    <ligand>
        <name>substrate</name>
    </ligand>
</feature>
<feature type="binding site" evidence="2">
    <location>
        <position position="105"/>
    </location>
    <ligand>
        <name>NAD(+)</name>
        <dbReference type="ChEBI" id="CHEBI:57540"/>
    </ligand>
</feature>
<feature type="binding site" evidence="2">
    <location>
        <begin position="122"/>
        <end position="124"/>
    </location>
    <ligand>
        <name>NAD(+)</name>
        <dbReference type="ChEBI" id="CHEBI:57540"/>
    </ligand>
</feature>
<feature type="binding site" evidence="2">
    <location>
        <begin position="124"/>
        <end position="127"/>
    </location>
    <ligand>
        <name>substrate</name>
    </ligand>
</feature>
<feature type="binding site" evidence="2">
    <location>
        <position position="147"/>
    </location>
    <ligand>
        <name>NAD(+)</name>
        <dbReference type="ChEBI" id="CHEBI:57540"/>
    </ligand>
</feature>
<feature type="binding site" evidence="2">
    <location>
        <begin position="152"/>
        <end position="155"/>
    </location>
    <ligand>
        <name>substrate</name>
    </ligand>
</feature>
<feature type="binding site" evidence="2">
    <location>
        <position position="232"/>
    </location>
    <ligand>
        <name>substrate</name>
    </ligand>
</feature>
<feature type="modified residue" description="Phosphotyrosine" evidence="2">
    <location>
        <position position="223"/>
    </location>
</feature>
<sequence length="317" mass="34569">MNKFKGNKVVLIGNGAVGSSYAFSLVNQSIVDELVIIDLDTEKVRGDVMDLKHATPYSPTTVRVKAGEYSDCHDADLVVICAGAAQKPGETRLDLVSKNLKIFKSIVGEVMASKFDGIFLVATNPVDILAYATWKFSGLPKERVIGSGTILDSARFRLLLSEAFDVAPRSVDAQIIGEHGDTELPVWSHANIAGQPLKTLLEQRPEGKAQIEQIFVQTRDAAYDIIQAKGATYYGVAMGLARITEAIFRNEDAVLTVSALLEGEYDEEDVYIGVPAVINRNGIRNVVEIPLNDEEQSKFAHSAKTLKDIMAEAEELK</sequence>
<organism>
    <name type="scientific">Staphylococcus aureus (strain JH1)</name>
    <dbReference type="NCBI Taxonomy" id="359787"/>
    <lineage>
        <taxon>Bacteria</taxon>
        <taxon>Bacillati</taxon>
        <taxon>Bacillota</taxon>
        <taxon>Bacilli</taxon>
        <taxon>Bacillales</taxon>
        <taxon>Staphylococcaceae</taxon>
        <taxon>Staphylococcus</taxon>
    </lineage>
</organism>
<dbReference type="EC" id="1.1.1.27" evidence="2"/>
<dbReference type="EMBL" id="CP000736">
    <property type="protein sequence ID" value="ABR51093.1"/>
    <property type="molecule type" value="Genomic_DNA"/>
</dbReference>
<dbReference type="SMR" id="A6TY25"/>
<dbReference type="KEGG" id="sah:SaurJH1_0231"/>
<dbReference type="HOGENOM" id="CLU_045401_1_1_9"/>
<dbReference type="UniPathway" id="UPA00554">
    <property type="reaction ID" value="UER00611"/>
</dbReference>
<dbReference type="GO" id="GO:0005737">
    <property type="term" value="C:cytoplasm"/>
    <property type="evidence" value="ECO:0007669"/>
    <property type="project" value="UniProtKB-SubCell"/>
</dbReference>
<dbReference type="GO" id="GO:0004459">
    <property type="term" value="F:L-lactate dehydrogenase activity"/>
    <property type="evidence" value="ECO:0007669"/>
    <property type="project" value="UniProtKB-UniRule"/>
</dbReference>
<dbReference type="GO" id="GO:0006096">
    <property type="term" value="P:glycolytic process"/>
    <property type="evidence" value="ECO:0007669"/>
    <property type="project" value="UniProtKB-UniRule"/>
</dbReference>
<dbReference type="GO" id="GO:0006089">
    <property type="term" value="P:lactate metabolic process"/>
    <property type="evidence" value="ECO:0007669"/>
    <property type="project" value="TreeGrafter"/>
</dbReference>
<dbReference type="CDD" id="cd05291">
    <property type="entry name" value="HicDH_like"/>
    <property type="match status" value="1"/>
</dbReference>
<dbReference type="FunFam" id="3.40.50.720:FF:000018">
    <property type="entry name" value="Malate dehydrogenase"/>
    <property type="match status" value="1"/>
</dbReference>
<dbReference type="Gene3D" id="3.90.110.10">
    <property type="entry name" value="Lactate dehydrogenase/glycoside hydrolase, family 4, C-terminal"/>
    <property type="match status" value="1"/>
</dbReference>
<dbReference type="Gene3D" id="3.40.50.720">
    <property type="entry name" value="NAD(P)-binding Rossmann-like Domain"/>
    <property type="match status" value="1"/>
</dbReference>
<dbReference type="HAMAP" id="MF_00488">
    <property type="entry name" value="Lactate_dehydrog"/>
    <property type="match status" value="1"/>
</dbReference>
<dbReference type="InterPro" id="IPR001557">
    <property type="entry name" value="L-lactate/malate_DH"/>
</dbReference>
<dbReference type="InterPro" id="IPR011304">
    <property type="entry name" value="L-lactate_DH"/>
</dbReference>
<dbReference type="InterPro" id="IPR018177">
    <property type="entry name" value="L-lactate_DH_AS"/>
</dbReference>
<dbReference type="InterPro" id="IPR022383">
    <property type="entry name" value="Lactate/malate_DH_C"/>
</dbReference>
<dbReference type="InterPro" id="IPR001236">
    <property type="entry name" value="Lactate/malate_DH_N"/>
</dbReference>
<dbReference type="InterPro" id="IPR015955">
    <property type="entry name" value="Lactate_DH/Glyco_Ohase_4_C"/>
</dbReference>
<dbReference type="InterPro" id="IPR036291">
    <property type="entry name" value="NAD(P)-bd_dom_sf"/>
</dbReference>
<dbReference type="NCBIfam" id="TIGR01771">
    <property type="entry name" value="L-LDH-NAD"/>
    <property type="match status" value="1"/>
</dbReference>
<dbReference type="NCBIfam" id="NF000824">
    <property type="entry name" value="PRK00066.1"/>
    <property type="match status" value="1"/>
</dbReference>
<dbReference type="NCBIfam" id="NF004863">
    <property type="entry name" value="PRK06223.1"/>
    <property type="match status" value="1"/>
</dbReference>
<dbReference type="PANTHER" id="PTHR43128">
    <property type="entry name" value="L-2-HYDROXYCARBOXYLATE DEHYDROGENASE (NAD(P)(+))"/>
    <property type="match status" value="1"/>
</dbReference>
<dbReference type="PANTHER" id="PTHR43128:SF16">
    <property type="entry name" value="L-LACTATE DEHYDROGENASE"/>
    <property type="match status" value="1"/>
</dbReference>
<dbReference type="Pfam" id="PF02866">
    <property type="entry name" value="Ldh_1_C"/>
    <property type="match status" value="1"/>
</dbReference>
<dbReference type="Pfam" id="PF00056">
    <property type="entry name" value="Ldh_1_N"/>
    <property type="match status" value="1"/>
</dbReference>
<dbReference type="PIRSF" id="PIRSF000102">
    <property type="entry name" value="Lac_mal_DH"/>
    <property type="match status" value="1"/>
</dbReference>
<dbReference type="PRINTS" id="PR00086">
    <property type="entry name" value="LLDHDRGNASE"/>
</dbReference>
<dbReference type="SUPFAM" id="SSF56327">
    <property type="entry name" value="LDH C-terminal domain-like"/>
    <property type="match status" value="1"/>
</dbReference>
<dbReference type="SUPFAM" id="SSF51735">
    <property type="entry name" value="NAD(P)-binding Rossmann-fold domains"/>
    <property type="match status" value="1"/>
</dbReference>
<dbReference type="PROSITE" id="PS00064">
    <property type="entry name" value="L_LDH"/>
    <property type="match status" value="1"/>
</dbReference>
<gene>
    <name evidence="2" type="primary">ldh1</name>
    <name type="ordered locus">SaurJH1_0231</name>
</gene>
<evidence type="ECO:0000250" key="1">
    <source>
        <dbReference type="UniProtKB" id="Q5HJD7"/>
    </source>
</evidence>
<evidence type="ECO:0000255" key="2">
    <source>
        <dbReference type="HAMAP-Rule" id="MF_00488"/>
    </source>
</evidence>
<evidence type="ECO:0000305" key="3"/>